<accession>B8ZL95</accession>
<evidence type="ECO:0000250" key="1"/>
<evidence type="ECO:0000255" key="2">
    <source>
        <dbReference type="HAMAP-Rule" id="MF_00118"/>
    </source>
</evidence>
<reference key="1">
    <citation type="journal article" date="2009" name="J. Bacteriol.">
        <title>Role of conjugative elements in the evolution of the multidrug-resistant pandemic clone Streptococcus pneumoniae Spain23F ST81.</title>
        <authorList>
            <person name="Croucher N.J."/>
            <person name="Walker D."/>
            <person name="Romero P."/>
            <person name="Lennard N."/>
            <person name="Paterson G.K."/>
            <person name="Bason N.C."/>
            <person name="Mitchell A.M."/>
            <person name="Quail M.A."/>
            <person name="Andrew P.W."/>
            <person name="Parkhill J."/>
            <person name="Bentley S.D."/>
            <person name="Mitchell T.J."/>
        </authorList>
    </citation>
    <scope>NUCLEOTIDE SEQUENCE [LARGE SCALE GENOMIC DNA]</scope>
    <source>
        <strain>ATCC 700669 / Spain 23F-1</strain>
    </source>
</reference>
<sequence length="398" mass="43971">MAKEKYDRSKPHVNIGTIGHVDHGKTTLTAAITTVLARRLPSSVNQPKDYASIDAAPEERERGITINTAHVEYETEKRHYAHIDAPGHADYVKNMITGAAQMDGAILVVASTDGPMPQTREHILLSRQVGVKHLIVFMNKVDLVDDEELLELVEMEIRDLLSEYDFPGDDLPVIQGSALKALEGDSKYEDIVMELMNTVDEYIPEPERDTDKPLLLPVEDVFSITGRGTVASGRIDRGIVKVNDEIEIVGIKEETQKAVVTGVEMFRKQLDEGLAGDNVGVLLRGVQRDEIERGQVIAKPGSINPHTKFKGEVYILTKEEGGRHTPFFNNYRPQFYFRTTDVTGSIELPAGTEMVMPGDNVTIDVELIHPIAVEQGTTFSIREGGRTVGSGMVTEIEA</sequence>
<gene>
    <name evidence="2" type="primary">tuf</name>
    <name type="ordered locus">SPN23F14530</name>
</gene>
<name>EFTU_STRPJ</name>
<protein>
    <recommendedName>
        <fullName evidence="2">Elongation factor Tu</fullName>
        <shortName evidence="2">EF-Tu</shortName>
        <ecNumber evidence="2">3.6.5.3</ecNumber>
    </recommendedName>
</protein>
<comment type="function">
    <text evidence="2">GTP hydrolase that promotes the GTP-dependent binding of aminoacyl-tRNA to the A-site of ribosomes during protein biosynthesis.</text>
</comment>
<comment type="catalytic activity">
    <reaction evidence="2">
        <text>GTP + H2O = GDP + phosphate + H(+)</text>
        <dbReference type="Rhea" id="RHEA:19669"/>
        <dbReference type="ChEBI" id="CHEBI:15377"/>
        <dbReference type="ChEBI" id="CHEBI:15378"/>
        <dbReference type="ChEBI" id="CHEBI:37565"/>
        <dbReference type="ChEBI" id="CHEBI:43474"/>
        <dbReference type="ChEBI" id="CHEBI:58189"/>
        <dbReference type="EC" id="3.6.5.3"/>
    </reaction>
    <physiologicalReaction direction="left-to-right" evidence="2">
        <dbReference type="Rhea" id="RHEA:19670"/>
    </physiologicalReaction>
</comment>
<comment type="subunit">
    <text evidence="2">Monomer.</text>
</comment>
<comment type="subcellular location">
    <subcellularLocation>
        <location evidence="2">Cytoplasm</location>
    </subcellularLocation>
</comment>
<comment type="similarity">
    <text evidence="2">Belongs to the TRAFAC class translation factor GTPase superfamily. Classic translation factor GTPase family. EF-Tu/EF-1A subfamily.</text>
</comment>
<organism>
    <name type="scientific">Streptococcus pneumoniae (strain ATCC 700669 / Spain 23F-1)</name>
    <dbReference type="NCBI Taxonomy" id="561276"/>
    <lineage>
        <taxon>Bacteria</taxon>
        <taxon>Bacillati</taxon>
        <taxon>Bacillota</taxon>
        <taxon>Bacilli</taxon>
        <taxon>Lactobacillales</taxon>
        <taxon>Streptococcaceae</taxon>
        <taxon>Streptococcus</taxon>
    </lineage>
</organism>
<feature type="chain" id="PRO_1000201414" description="Elongation factor Tu">
    <location>
        <begin position="1"/>
        <end position="398"/>
    </location>
</feature>
<feature type="domain" description="tr-type G">
    <location>
        <begin position="10"/>
        <end position="207"/>
    </location>
</feature>
<feature type="region of interest" description="G1" evidence="1">
    <location>
        <begin position="19"/>
        <end position="26"/>
    </location>
</feature>
<feature type="region of interest" description="G2" evidence="1">
    <location>
        <begin position="63"/>
        <end position="67"/>
    </location>
</feature>
<feature type="region of interest" description="G3" evidence="1">
    <location>
        <begin position="84"/>
        <end position="87"/>
    </location>
</feature>
<feature type="region of interest" description="G4" evidence="1">
    <location>
        <begin position="139"/>
        <end position="142"/>
    </location>
</feature>
<feature type="region of interest" description="G5" evidence="1">
    <location>
        <begin position="177"/>
        <end position="179"/>
    </location>
</feature>
<feature type="binding site" evidence="2">
    <location>
        <begin position="19"/>
        <end position="26"/>
    </location>
    <ligand>
        <name>GTP</name>
        <dbReference type="ChEBI" id="CHEBI:37565"/>
    </ligand>
</feature>
<feature type="binding site" evidence="2">
    <location>
        <position position="26"/>
    </location>
    <ligand>
        <name>Mg(2+)</name>
        <dbReference type="ChEBI" id="CHEBI:18420"/>
    </ligand>
</feature>
<feature type="binding site" evidence="2">
    <location>
        <begin position="84"/>
        <end position="88"/>
    </location>
    <ligand>
        <name>GTP</name>
        <dbReference type="ChEBI" id="CHEBI:37565"/>
    </ligand>
</feature>
<feature type="binding site" evidence="2">
    <location>
        <begin position="139"/>
        <end position="142"/>
    </location>
    <ligand>
        <name>GTP</name>
        <dbReference type="ChEBI" id="CHEBI:37565"/>
    </ligand>
</feature>
<keyword id="KW-0963">Cytoplasm</keyword>
<keyword id="KW-0251">Elongation factor</keyword>
<keyword id="KW-0342">GTP-binding</keyword>
<keyword id="KW-0378">Hydrolase</keyword>
<keyword id="KW-0460">Magnesium</keyword>
<keyword id="KW-0479">Metal-binding</keyword>
<keyword id="KW-0547">Nucleotide-binding</keyword>
<keyword id="KW-0648">Protein biosynthesis</keyword>
<dbReference type="EC" id="3.6.5.3" evidence="2"/>
<dbReference type="EMBL" id="FM211187">
    <property type="protein sequence ID" value="CAR69239.1"/>
    <property type="molecule type" value="Genomic_DNA"/>
</dbReference>
<dbReference type="RefSeq" id="WP_001040724.1">
    <property type="nucleotide sequence ID" value="NC_011900.1"/>
</dbReference>
<dbReference type="SMR" id="B8ZL95"/>
<dbReference type="GeneID" id="45653269"/>
<dbReference type="KEGG" id="sne:SPN23F14530"/>
<dbReference type="HOGENOM" id="CLU_007265_0_1_9"/>
<dbReference type="GO" id="GO:0005829">
    <property type="term" value="C:cytosol"/>
    <property type="evidence" value="ECO:0007669"/>
    <property type="project" value="TreeGrafter"/>
</dbReference>
<dbReference type="GO" id="GO:0005525">
    <property type="term" value="F:GTP binding"/>
    <property type="evidence" value="ECO:0007669"/>
    <property type="project" value="UniProtKB-UniRule"/>
</dbReference>
<dbReference type="GO" id="GO:0003924">
    <property type="term" value="F:GTPase activity"/>
    <property type="evidence" value="ECO:0007669"/>
    <property type="project" value="InterPro"/>
</dbReference>
<dbReference type="GO" id="GO:0003746">
    <property type="term" value="F:translation elongation factor activity"/>
    <property type="evidence" value="ECO:0007669"/>
    <property type="project" value="UniProtKB-UniRule"/>
</dbReference>
<dbReference type="CDD" id="cd01884">
    <property type="entry name" value="EF_Tu"/>
    <property type="match status" value="1"/>
</dbReference>
<dbReference type="CDD" id="cd03697">
    <property type="entry name" value="EFTU_II"/>
    <property type="match status" value="1"/>
</dbReference>
<dbReference type="CDD" id="cd03707">
    <property type="entry name" value="EFTU_III"/>
    <property type="match status" value="1"/>
</dbReference>
<dbReference type="FunFam" id="2.40.30.10:FF:000001">
    <property type="entry name" value="Elongation factor Tu"/>
    <property type="match status" value="1"/>
</dbReference>
<dbReference type="FunFam" id="3.40.50.300:FF:000003">
    <property type="entry name" value="Elongation factor Tu"/>
    <property type="match status" value="1"/>
</dbReference>
<dbReference type="Gene3D" id="3.40.50.300">
    <property type="entry name" value="P-loop containing nucleotide triphosphate hydrolases"/>
    <property type="match status" value="1"/>
</dbReference>
<dbReference type="Gene3D" id="2.40.30.10">
    <property type="entry name" value="Translation factors"/>
    <property type="match status" value="2"/>
</dbReference>
<dbReference type="HAMAP" id="MF_00118_B">
    <property type="entry name" value="EF_Tu_B"/>
    <property type="match status" value="1"/>
</dbReference>
<dbReference type="InterPro" id="IPR041709">
    <property type="entry name" value="EF-Tu_GTP-bd"/>
</dbReference>
<dbReference type="InterPro" id="IPR050055">
    <property type="entry name" value="EF-Tu_GTPase"/>
</dbReference>
<dbReference type="InterPro" id="IPR004161">
    <property type="entry name" value="EFTu-like_2"/>
</dbReference>
<dbReference type="InterPro" id="IPR033720">
    <property type="entry name" value="EFTU_2"/>
</dbReference>
<dbReference type="InterPro" id="IPR031157">
    <property type="entry name" value="G_TR_CS"/>
</dbReference>
<dbReference type="InterPro" id="IPR027417">
    <property type="entry name" value="P-loop_NTPase"/>
</dbReference>
<dbReference type="InterPro" id="IPR005225">
    <property type="entry name" value="Small_GTP-bd"/>
</dbReference>
<dbReference type="InterPro" id="IPR000795">
    <property type="entry name" value="T_Tr_GTP-bd_dom"/>
</dbReference>
<dbReference type="InterPro" id="IPR009000">
    <property type="entry name" value="Transl_B-barrel_sf"/>
</dbReference>
<dbReference type="InterPro" id="IPR009001">
    <property type="entry name" value="Transl_elong_EF1A/Init_IF2_C"/>
</dbReference>
<dbReference type="InterPro" id="IPR004541">
    <property type="entry name" value="Transl_elong_EFTu/EF1A_bac/org"/>
</dbReference>
<dbReference type="InterPro" id="IPR004160">
    <property type="entry name" value="Transl_elong_EFTu/EF1A_C"/>
</dbReference>
<dbReference type="NCBIfam" id="TIGR00485">
    <property type="entry name" value="EF-Tu"/>
    <property type="match status" value="1"/>
</dbReference>
<dbReference type="NCBIfam" id="NF000766">
    <property type="entry name" value="PRK00049.1"/>
    <property type="match status" value="1"/>
</dbReference>
<dbReference type="NCBIfam" id="NF009372">
    <property type="entry name" value="PRK12735.1"/>
    <property type="match status" value="1"/>
</dbReference>
<dbReference type="NCBIfam" id="NF009373">
    <property type="entry name" value="PRK12736.1"/>
    <property type="match status" value="1"/>
</dbReference>
<dbReference type="NCBIfam" id="TIGR00231">
    <property type="entry name" value="small_GTP"/>
    <property type="match status" value="1"/>
</dbReference>
<dbReference type="PANTHER" id="PTHR43721:SF22">
    <property type="entry name" value="ELONGATION FACTOR TU, MITOCHONDRIAL"/>
    <property type="match status" value="1"/>
</dbReference>
<dbReference type="PANTHER" id="PTHR43721">
    <property type="entry name" value="ELONGATION FACTOR TU-RELATED"/>
    <property type="match status" value="1"/>
</dbReference>
<dbReference type="Pfam" id="PF00009">
    <property type="entry name" value="GTP_EFTU"/>
    <property type="match status" value="1"/>
</dbReference>
<dbReference type="Pfam" id="PF03144">
    <property type="entry name" value="GTP_EFTU_D2"/>
    <property type="match status" value="1"/>
</dbReference>
<dbReference type="Pfam" id="PF03143">
    <property type="entry name" value="GTP_EFTU_D3"/>
    <property type="match status" value="1"/>
</dbReference>
<dbReference type="PRINTS" id="PR00315">
    <property type="entry name" value="ELONGATNFCT"/>
</dbReference>
<dbReference type="SUPFAM" id="SSF50465">
    <property type="entry name" value="EF-Tu/eEF-1alpha/eIF2-gamma C-terminal domain"/>
    <property type="match status" value="1"/>
</dbReference>
<dbReference type="SUPFAM" id="SSF52540">
    <property type="entry name" value="P-loop containing nucleoside triphosphate hydrolases"/>
    <property type="match status" value="1"/>
</dbReference>
<dbReference type="SUPFAM" id="SSF50447">
    <property type="entry name" value="Translation proteins"/>
    <property type="match status" value="1"/>
</dbReference>
<dbReference type="PROSITE" id="PS00301">
    <property type="entry name" value="G_TR_1"/>
    <property type="match status" value="1"/>
</dbReference>
<dbReference type="PROSITE" id="PS51722">
    <property type="entry name" value="G_TR_2"/>
    <property type="match status" value="1"/>
</dbReference>
<proteinExistence type="inferred from homology"/>